<sequence>MASKSGSGGLREPPNEQAVLNMYEGKRSELSQIYSNITDLEMQVSEHSLVINAIQPLDQSRKCFRMIGGVLVERTIKEVLPAVQRNKDGLEEVVRKLYETLEKKKKDLTEFEAKYKIRITKQEDNKEGGNKKEGNAQGVLVGAASSSQ</sequence>
<proteinExistence type="evidence at protein level"/>
<organism>
    <name type="scientific">Arabidopsis thaliana</name>
    <name type="common">Mouse-ear cress</name>
    <dbReference type="NCBI Taxonomy" id="3702"/>
    <lineage>
        <taxon>Eukaryota</taxon>
        <taxon>Viridiplantae</taxon>
        <taxon>Streptophyta</taxon>
        <taxon>Embryophyta</taxon>
        <taxon>Tracheophyta</taxon>
        <taxon>Spermatophyta</taxon>
        <taxon>Magnoliopsida</taxon>
        <taxon>eudicotyledons</taxon>
        <taxon>Gunneridae</taxon>
        <taxon>Pentapetalae</taxon>
        <taxon>rosids</taxon>
        <taxon>malvids</taxon>
        <taxon>Brassicales</taxon>
        <taxon>Brassicaceae</taxon>
        <taxon>Camelineae</taxon>
        <taxon>Arabidopsis</taxon>
    </lineage>
</organism>
<gene>
    <name evidence="8" type="primary">PFD2</name>
    <name evidence="8" type="synonym">GIM4</name>
    <name evidence="10" type="ordered locus">At3g22480</name>
    <name evidence="11" type="ORF">F16J14.4</name>
</gene>
<keyword id="KW-0143">Chaperone</keyword>
<keyword id="KW-0175">Coiled coil</keyword>
<keyword id="KW-0963">Cytoplasm</keyword>
<keyword id="KW-0539">Nucleus</keyword>
<keyword id="KW-1185">Reference proteome</keyword>
<feature type="chain" id="PRO_0000124839" description="Prefoldin subunit 2">
    <location>
        <begin position="1"/>
        <end position="148"/>
    </location>
</feature>
<feature type="region of interest" description="Disordered" evidence="5">
    <location>
        <begin position="122"/>
        <end position="148"/>
    </location>
</feature>
<feature type="coiled-coil region" evidence="4">
    <location>
        <begin position="87"/>
        <end position="114"/>
    </location>
</feature>
<feature type="compositionally biased region" description="Basic and acidic residues" evidence="5">
    <location>
        <begin position="122"/>
        <end position="134"/>
    </location>
</feature>
<accession>Q9LJ98</accession>
<comment type="function">
    <text evidence="2 3 7 8">Binds specifically to cytosolic chaperonin (c-CPN) and transfers target proteins to it (PubMed:19825635). Binds to nascent polypeptide chain and promotes folding in an environment in which there are many competing pathways for nonnative proteins (PubMed:19825635). Together with other chaperonins, contribute to the regulation of gene expression by modulating the spliceosome function on pre-mRNA splicing post-transcriptionally by acting as a co-chaperone of Hsp90 to control levels of LSM8 (PubMed:32396196). Required for microtubules (MTs) organization and dynamicity (By similarity). Involved in the process leading to microtubules dissociation in response to gibberellic acid (GA) probably due to the DELLA proteins-mediated translocation of the prefoldin co-chaperone complex from the cytoplasm to the nucleus (By similarity).</text>
</comment>
<comment type="subunit">
    <text evidence="1 7">Heterohexamer of two PFD-alpha type and four PFD-beta type subunits forming prefoldin co-chaperone complex (By similarity). Interacts with LSM8, a specific subunit of the LSM2-8 complex, which is a core component of the spliceosome (PubMed:32396196).</text>
</comment>
<comment type="subcellular location">
    <subcellularLocation>
        <location evidence="2">Cytoplasm</location>
    </subcellularLocation>
    <subcellularLocation>
        <location evidence="2">Nucleus</location>
    </subcellularLocation>
    <text evidence="2">In the presence of gibberellic acid (GA) and at room temperature, the prefoldin complex stays in the cytoplasm and is functional (By similarity). But in the absence of GA or in response to cold, the prefoldin complex is localized to the nucleus in the presence of DELLA proteins, which severely compromises alpha/beta-tubulin heterodimer availability, thus affecting microtubules (MTs) organization (By similarity). This changing subcellular localization follows a daily rhythm coordinated oscillation (By similarity).</text>
</comment>
<comment type="induction">
    <text evidence="6">Accumulates in response to cold.</text>
</comment>
<comment type="disruption phenotype">
    <text evidence="7">Smaller plants (PubMed:32396196). Lower pre-mRNA splicing events and reduced production of U6 snRNA in plants lacking PFD2, PFD4 and PFD6, probably due to a reduced activity of the LSM2-8 complex (PubMed:32396196).</text>
</comment>
<comment type="similarity">
    <text evidence="9">Belongs to the prefoldin subunit beta family.</text>
</comment>
<dbReference type="EMBL" id="AP000731">
    <property type="protein sequence ID" value="BAB01463.1"/>
    <property type="molecule type" value="Genomic_DNA"/>
</dbReference>
<dbReference type="EMBL" id="CP002686">
    <property type="protein sequence ID" value="AEE76644.1"/>
    <property type="molecule type" value="Genomic_DNA"/>
</dbReference>
<dbReference type="EMBL" id="CP002686">
    <property type="protein sequence ID" value="AEE76645.1"/>
    <property type="molecule type" value="Genomic_DNA"/>
</dbReference>
<dbReference type="EMBL" id="AY113920">
    <property type="protein sequence ID" value="AAM44968.1"/>
    <property type="molecule type" value="mRNA"/>
</dbReference>
<dbReference type="EMBL" id="AY034920">
    <property type="protein sequence ID" value="AAK59427.1"/>
    <property type="molecule type" value="mRNA"/>
</dbReference>
<dbReference type="EMBL" id="AY086635">
    <property type="protein sequence ID" value="AAM63693.1"/>
    <property type="molecule type" value="mRNA"/>
</dbReference>
<dbReference type="SMR" id="Q9LJ98"/>
<dbReference type="BioGRID" id="7151">
    <property type="interactions" value="6"/>
</dbReference>
<dbReference type="FunCoup" id="Q9LJ98">
    <property type="interactions" value="4033"/>
</dbReference>
<dbReference type="IntAct" id="Q9LJ98">
    <property type="interactions" value="1"/>
</dbReference>
<dbReference type="STRING" id="3702.Q9LJ98"/>
<dbReference type="iPTMnet" id="Q9LJ98"/>
<dbReference type="PaxDb" id="3702-AT3G22480.1"/>
<dbReference type="ProteomicsDB" id="236310"/>
<dbReference type="DNASU" id="821819"/>
<dbReference type="EnsemblPlants" id="AT3G22480.1">
    <property type="protein sequence ID" value="AT3G22480.1"/>
    <property type="gene ID" value="AT3G22480"/>
</dbReference>
<dbReference type="EnsemblPlants" id="AT3G22480.2">
    <property type="protein sequence ID" value="AT3G22480.2"/>
    <property type="gene ID" value="AT3G22480"/>
</dbReference>
<dbReference type="Gramene" id="AT3G22480.1">
    <property type="protein sequence ID" value="AT3G22480.1"/>
    <property type="gene ID" value="AT3G22480"/>
</dbReference>
<dbReference type="Gramene" id="AT3G22480.2">
    <property type="protein sequence ID" value="AT3G22480.2"/>
    <property type="gene ID" value="AT3G22480"/>
</dbReference>
<dbReference type="KEGG" id="ath:AT3G22480"/>
<dbReference type="Araport" id="AT3G22480"/>
<dbReference type="TAIR" id="AT3G22480">
    <property type="gene designation" value="PDF2"/>
</dbReference>
<dbReference type="eggNOG" id="KOG4098">
    <property type="taxonomic scope" value="Eukaryota"/>
</dbReference>
<dbReference type="HOGENOM" id="CLU_113004_0_0_1"/>
<dbReference type="InParanoid" id="Q9LJ98"/>
<dbReference type="OMA" id="CFKMIGG"/>
<dbReference type="OrthoDB" id="29646at2759"/>
<dbReference type="PhylomeDB" id="Q9LJ98"/>
<dbReference type="PRO" id="PR:Q9LJ98"/>
<dbReference type="Proteomes" id="UP000006548">
    <property type="component" value="Chromosome 3"/>
</dbReference>
<dbReference type="ExpressionAtlas" id="Q9LJ98">
    <property type="expression patterns" value="baseline and differential"/>
</dbReference>
<dbReference type="GO" id="GO:0005737">
    <property type="term" value="C:cytoplasm"/>
    <property type="evidence" value="ECO:0000250"/>
    <property type="project" value="UniProtKB"/>
</dbReference>
<dbReference type="GO" id="GO:0005634">
    <property type="term" value="C:nucleus"/>
    <property type="evidence" value="ECO:0000250"/>
    <property type="project" value="UniProtKB"/>
</dbReference>
<dbReference type="GO" id="GO:0016272">
    <property type="term" value="C:prefoldin complex"/>
    <property type="evidence" value="ECO:0000250"/>
    <property type="project" value="UniProtKB"/>
</dbReference>
<dbReference type="GO" id="GO:0051082">
    <property type="term" value="F:unfolded protein binding"/>
    <property type="evidence" value="ECO:0007669"/>
    <property type="project" value="InterPro"/>
</dbReference>
<dbReference type="GO" id="GO:0071370">
    <property type="term" value="P:cellular response to gibberellin stimulus"/>
    <property type="evidence" value="ECO:0000250"/>
    <property type="project" value="UniProtKB"/>
</dbReference>
<dbReference type="GO" id="GO:0043622">
    <property type="term" value="P:cortical microtubule organization"/>
    <property type="evidence" value="ECO:0000250"/>
    <property type="project" value="UniProtKB"/>
</dbReference>
<dbReference type="GO" id="GO:0006397">
    <property type="term" value="P:mRNA processing"/>
    <property type="evidence" value="ECO:0000315"/>
    <property type="project" value="UniProtKB"/>
</dbReference>
<dbReference type="GO" id="GO:0006457">
    <property type="term" value="P:protein folding"/>
    <property type="evidence" value="ECO:0000315"/>
    <property type="project" value="UniProtKB"/>
</dbReference>
<dbReference type="GO" id="GO:0009409">
    <property type="term" value="P:response to cold"/>
    <property type="evidence" value="ECO:0000270"/>
    <property type="project" value="UniProtKB"/>
</dbReference>
<dbReference type="CDD" id="cd23163">
    <property type="entry name" value="Prefoldin_2"/>
    <property type="match status" value="1"/>
</dbReference>
<dbReference type="FunFam" id="1.10.287.370:FF:000002">
    <property type="entry name" value="Prefoldin subunit 2"/>
    <property type="match status" value="1"/>
</dbReference>
<dbReference type="Gene3D" id="1.10.287.370">
    <property type="match status" value="1"/>
</dbReference>
<dbReference type="InterPro" id="IPR027235">
    <property type="entry name" value="PFD2"/>
</dbReference>
<dbReference type="InterPro" id="IPR002777">
    <property type="entry name" value="PFD_beta-like"/>
</dbReference>
<dbReference type="InterPro" id="IPR009053">
    <property type="entry name" value="Prefoldin"/>
</dbReference>
<dbReference type="PANTHER" id="PTHR13303">
    <property type="entry name" value="PREFOLDIN SUBUNIT 2"/>
    <property type="match status" value="1"/>
</dbReference>
<dbReference type="Pfam" id="PF01920">
    <property type="entry name" value="Prefoldin_2"/>
    <property type="match status" value="1"/>
</dbReference>
<dbReference type="SUPFAM" id="SSF46579">
    <property type="entry name" value="Prefoldin"/>
    <property type="match status" value="1"/>
</dbReference>
<reference key="1">
    <citation type="journal article" date="2000" name="DNA Res.">
        <title>Structural analysis of Arabidopsis thaliana chromosome 3. II. Sequence features of the 4,251,695 bp regions covered by 90 P1, TAC and BAC clones.</title>
        <authorList>
            <person name="Kaneko T."/>
            <person name="Katoh T."/>
            <person name="Sato S."/>
            <person name="Nakamura Y."/>
            <person name="Asamizu E."/>
            <person name="Tabata S."/>
        </authorList>
    </citation>
    <scope>NUCLEOTIDE SEQUENCE [LARGE SCALE GENOMIC DNA]</scope>
    <source>
        <strain>cv. Columbia</strain>
    </source>
</reference>
<reference key="2">
    <citation type="journal article" date="2017" name="Plant J.">
        <title>Araport11: a complete reannotation of the Arabidopsis thaliana reference genome.</title>
        <authorList>
            <person name="Cheng C.Y."/>
            <person name="Krishnakumar V."/>
            <person name="Chan A.P."/>
            <person name="Thibaud-Nissen F."/>
            <person name="Schobel S."/>
            <person name="Town C.D."/>
        </authorList>
    </citation>
    <scope>GENOME REANNOTATION</scope>
    <source>
        <strain>cv. Columbia</strain>
    </source>
</reference>
<reference key="3">
    <citation type="journal article" date="2003" name="Science">
        <title>Empirical analysis of transcriptional activity in the Arabidopsis genome.</title>
        <authorList>
            <person name="Yamada K."/>
            <person name="Lim J."/>
            <person name="Dale J.M."/>
            <person name="Chen H."/>
            <person name="Shinn P."/>
            <person name="Palm C.J."/>
            <person name="Southwick A.M."/>
            <person name="Wu H.C."/>
            <person name="Kim C.J."/>
            <person name="Nguyen M."/>
            <person name="Pham P.K."/>
            <person name="Cheuk R.F."/>
            <person name="Karlin-Newmann G."/>
            <person name="Liu S.X."/>
            <person name="Lam B."/>
            <person name="Sakano H."/>
            <person name="Wu T."/>
            <person name="Yu G."/>
            <person name="Miranda M."/>
            <person name="Quach H.L."/>
            <person name="Tripp M."/>
            <person name="Chang C.H."/>
            <person name="Lee J.M."/>
            <person name="Toriumi M.J."/>
            <person name="Chan M.M."/>
            <person name="Tang C.C."/>
            <person name="Onodera C.S."/>
            <person name="Deng J.M."/>
            <person name="Akiyama K."/>
            <person name="Ansari Y."/>
            <person name="Arakawa T."/>
            <person name="Banh J."/>
            <person name="Banno F."/>
            <person name="Bowser L."/>
            <person name="Brooks S.Y."/>
            <person name="Carninci P."/>
            <person name="Chao Q."/>
            <person name="Choy N."/>
            <person name="Enju A."/>
            <person name="Goldsmith A.D."/>
            <person name="Gurjal M."/>
            <person name="Hansen N.F."/>
            <person name="Hayashizaki Y."/>
            <person name="Johnson-Hopson C."/>
            <person name="Hsuan V.W."/>
            <person name="Iida K."/>
            <person name="Karnes M."/>
            <person name="Khan S."/>
            <person name="Koesema E."/>
            <person name="Ishida J."/>
            <person name="Jiang P.X."/>
            <person name="Jones T."/>
            <person name="Kawai J."/>
            <person name="Kamiya A."/>
            <person name="Meyers C."/>
            <person name="Nakajima M."/>
            <person name="Narusaka M."/>
            <person name="Seki M."/>
            <person name="Sakurai T."/>
            <person name="Satou M."/>
            <person name="Tamse R."/>
            <person name="Vaysberg M."/>
            <person name="Wallender E.K."/>
            <person name="Wong C."/>
            <person name="Yamamura Y."/>
            <person name="Yuan S."/>
            <person name="Shinozaki K."/>
            <person name="Davis R.W."/>
            <person name="Theologis A."/>
            <person name="Ecker J.R."/>
        </authorList>
    </citation>
    <scope>NUCLEOTIDE SEQUENCE [LARGE SCALE MRNA]</scope>
    <source>
        <strain>cv. Columbia</strain>
    </source>
</reference>
<reference key="4">
    <citation type="submission" date="2002-03" db="EMBL/GenBank/DDBJ databases">
        <title>Full-length cDNA from Arabidopsis thaliana.</title>
        <authorList>
            <person name="Brover V.V."/>
            <person name="Troukhan M.E."/>
            <person name="Alexandrov N.A."/>
            <person name="Lu Y.-P."/>
            <person name="Flavell R.B."/>
            <person name="Feldmann K.A."/>
        </authorList>
    </citation>
    <scope>NUCLEOTIDE SEQUENCE [LARGE SCALE MRNA]</scope>
</reference>
<reference key="5">
    <citation type="journal article" date="2008" name="Proc. Natl. Acad. Sci. U.S.A.">
        <title>Prefoldin 6 is required for normal microtubule dynamics and organization in Arabidopsis.</title>
        <authorList>
            <person name="Gu Y."/>
            <person name="Deng Z."/>
            <person name="Paredez A.R."/>
            <person name="DeBolt S."/>
            <person name="Wang Z.-Y."/>
            <person name="Somerville C."/>
        </authorList>
    </citation>
    <scope>INTERACTION WITH PFD6</scope>
    <source>
        <strain>cv. Columbia</strain>
    </source>
</reference>
<reference key="6">
    <citation type="journal article" date="2009" name="Mol. Plant">
        <title>Prefoldins 3 and 5 play an essential role in Arabidopsis tolerance to salt stress.</title>
        <authorList>
            <person name="Rodriguez-Milla M.A."/>
            <person name="Salinas J."/>
        </authorList>
    </citation>
    <scope>FUNCTION</scope>
    <scope>GENE FAMILY</scope>
    <scope>NOMENCLATURE</scope>
</reference>
<reference key="7">
    <citation type="journal article" date="2017" name="Mol. Plant">
        <title>Prefoldins negatively regulate cold acclimation in Arabidopsis thaliana by promoting nuclear proteasome-mediated HY5 degradation.</title>
        <authorList>
            <person name="Perea-Resa C."/>
            <person name="Rodriguez-Milla M.A."/>
            <person name="Iniesto E."/>
            <person name="Rubio V."/>
            <person name="Salinas J."/>
        </authorList>
    </citation>
    <scope>INDUCTION BY COLD</scope>
</reference>
<reference key="8">
    <citation type="journal article" date="2020" name="Nucleic Acids Res.">
        <title>Prefoldins contribute to maintaining the levels of the spliceosome LSM2-8 complex through Hsp90 in Arabidopsis.</title>
        <authorList>
            <person name="Esteve-Bruna D."/>
            <person name="Carrasco-Lopez C."/>
            <person name="Blanco-Tourinan N."/>
            <person name="Iserte J."/>
            <person name="Calleja-Cabrera J."/>
            <person name="Perea-Resa C."/>
            <person name="Urbez C."/>
            <person name="Carrasco P."/>
            <person name="Yanovsky M.J."/>
            <person name="Blazquez M.A."/>
            <person name="Salinas J."/>
            <person name="Alabadi D."/>
        </authorList>
    </citation>
    <scope>FUNCTION</scope>
    <scope>DISRUPTION PHENOTYPE</scope>
    <scope>INTERACTION WITH LSM8</scope>
    <source>
        <strain>cv. Columbia</strain>
    </source>
</reference>
<protein>
    <recommendedName>
        <fullName evidence="8">Prefoldin subunit 2</fullName>
    </recommendedName>
    <alternativeName>
        <fullName evidence="8">Gene involved in microtubule biogenesis 4</fullName>
    </alternativeName>
</protein>
<evidence type="ECO:0000250" key="1">
    <source>
        <dbReference type="UniProtKB" id="P46988"/>
    </source>
</evidence>
<evidence type="ECO:0000250" key="2">
    <source>
        <dbReference type="UniProtKB" id="P57742"/>
    </source>
</evidence>
<evidence type="ECO:0000250" key="3">
    <source>
        <dbReference type="UniProtKB" id="Q2HIK4"/>
    </source>
</evidence>
<evidence type="ECO:0000255" key="4"/>
<evidence type="ECO:0000256" key="5">
    <source>
        <dbReference type="SAM" id="MobiDB-lite"/>
    </source>
</evidence>
<evidence type="ECO:0000269" key="6">
    <source>
    </source>
</evidence>
<evidence type="ECO:0000269" key="7">
    <source>
    </source>
</evidence>
<evidence type="ECO:0000303" key="8">
    <source>
    </source>
</evidence>
<evidence type="ECO:0000305" key="9"/>
<evidence type="ECO:0000312" key="10">
    <source>
        <dbReference type="Araport" id="AT3G22480"/>
    </source>
</evidence>
<evidence type="ECO:0000312" key="11">
    <source>
        <dbReference type="EMBL" id="BAB01463.1"/>
    </source>
</evidence>
<name>PFD2_ARATH</name>